<keyword id="KW-0378">Hydrolase</keyword>
<keyword id="KW-0441">Lipid A biosynthesis</keyword>
<keyword id="KW-0444">Lipid biosynthesis</keyword>
<keyword id="KW-0443">Lipid metabolism</keyword>
<keyword id="KW-0479">Metal-binding</keyword>
<keyword id="KW-1185">Reference proteome</keyword>
<keyword id="KW-0862">Zinc</keyword>
<feature type="chain" id="PRO_1000134393" description="UDP-3-O-acyl-N-acetylglucosamine deacetylase">
    <location>
        <begin position="1"/>
        <end position="294"/>
    </location>
</feature>
<feature type="active site" description="Proton donor" evidence="1">
    <location>
        <position position="259"/>
    </location>
</feature>
<feature type="binding site" evidence="1">
    <location>
        <position position="75"/>
    </location>
    <ligand>
        <name>Zn(2+)</name>
        <dbReference type="ChEBI" id="CHEBI:29105"/>
    </ligand>
</feature>
<feature type="binding site" evidence="1">
    <location>
        <position position="232"/>
    </location>
    <ligand>
        <name>Zn(2+)</name>
        <dbReference type="ChEBI" id="CHEBI:29105"/>
    </ligand>
</feature>
<feature type="binding site" evidence="1">
    <location>
        <position position="236"/>
    </location>
    <ligand>
        <name>Zn(2+)</name>
        <dbReference type="ChEBI" id="CHEBI:29105"/>
    </ligand>
</feature>
<name>LPXC_CAMLR</name>
<proteinExistence type="inferred from homology"/>
<comment type="function">
    <text evidence="1">Catalyzes the hydrolysis of UDP-3-O-myristoyl-N-acetylglucosamine to form UDP-3-O-myristoylglucosamine and acetate, the committed step in lipid A biosynthesis.</text>
</comment>
<comment type="catalytic activity">
    <reaction evidence="1">
        <text>a UDP-3-O-[(3R)-3-hydroxyacyl]-N-acetyl-alpha-D-glucosamine + H2O = a UDP-3-O-[(3R)-3-hydroxyacyl]-alpha-D-glucosamine + acetate</text>
        <dbReference type="Rhea" id="RHEA:67816"/>
        <dbReference type="ChEBI" id="CHEBI:15377"/>
        <dbReference type="ChEBI" id="CHEBI:30089"/>
        <dbReference type="ChEBI" id="CHEBI:137740"/>
        <dbReference type="ChEBI" id="CHEBI:173225"/>
        <dbReference type="EC" id="3.5.1.108"/>
    </reaction>
</comment>
<comment type="cofactor">
    <cofactor evidence="1">
        <name>Zn(2+)</name>
        <dbReference type="ChEBI" id="CHEBI:29105"/>
    </cofactor>
</comment>
<comment type="pathway">
    <text evidence="1">Glycolipid biosynthesis; lipid IV(A) biosynthesis; lipid IV(A) from (3R)-3-hydroxytetradecanoyl-[acyl-carrier-protein] and UDP-N-acetyl-alpha-D-glucosamine: step 2/6.</text>
</comment>
<comment type="similarity">
    <text evidence="1">Belongs to the LpxC family.</text>
</comment>
<gene>
    <name evidence="1" type="primary">lpxC</name>
    <name type="ordered locus">Cla_0218</name>
</gene>
<evidence type="ECO:0000255" key="1">
    <source>
        <dbReference type="HAMAP-Rule" id="MF_00388"/>
    </source>
</evidence>
<accession>B9KEU6</accession>
<organism>
    <name type="scientific">Campylobacter lari (strain RM2100 / D67 / ATCC BAA-1060)</name>
    <dbReference type="NCBI Taxonomy" id="306263"/>
    <lineage>
        <taxon>Bacteria</taxon>
        <taxon>Pseudomonadati</taxon>
        <taxon>Campylobacterota</taxon>
        <taxon>Epsilonproteobacteria</taxon>
        <taxon>Campylobacterales</taxon>
        <taxon>Campylobacteraceae</taxon>
        <taxon>Campylobacter</taxon>
    </lineage>
</organism>
<reference key="1">
    <citation type="journal article" date="2008" name="Foodborne Pathog. Dis.">
        <title>The complete genome sequence and analysis of the human pathogen Campylobacter lari.</title>
        <authorList>
            <person name="Miller W.G."/>
            <person name="Wang G."/>
            <person name="Binnewies T.T."/>
            <person name="Parker C.T."/>
        </authorList>
    </citation>
    <scope>NUCLEOTIDE SEQUENCE [LARGE SCALE GENOMIC DNA]</scope>
    <source>
        <strain>RM2100 / D67 / ATCC BAA-1060</strain>
    </source>
</reference>
<protein>
    <recommendedName>
        <fullName evidence="1">UDP-3-O-acyl-N-acetylglucosamine deacetylase</fullName>
        <shortName evidence="1">UDP-3-O-acyl-GlcNAc deacetylase</shortName>
        <ecNumber evidence="1">3.5.1.108</ecNumber>
    </recommendedName>
    <alternativeName>
        <fullName evidence="1">UDP-3-O-[R-3-hydroxymyristoyl]-N-acetylglucosamine deacetylase</fullName>
    </alternativeName>
</protein>
<sequence length="294" mass="32689">MNQTTIAKEVKGIGIGLHKGEPISIKLEPLEAGSGIVFYRSDLGISYEAKPENVIDTQMATVIGDHRGYVSTIEHLMSAINAYGIDNVRIVLDANEAPVMDGSSIGFCMMLEEAGIKELDVAKKILVIKKSVEVKEGNKFVRLSPTDMPIINYTIEFDNPIIGKQNYCFEFSKQNYIEQIARARTFGFLKDVQALRAMNLGLGGSLENAVVIDDNRILNPEGLRFKDEFVRHKILDAIGDLTLLGCRVFGDYTSYAGSHKLNHLLTKELLKDPSAYEVVSLEKSTYKVYEKVFA</sequence>
<dbReference type="EC" id="3.5.1.108" evidence="1"/>
<dbReference type="EMBL" id="CP000932">
    <property type="protein sequence ID" value="ACM63581.1"/>
    <property type="molecule type" value="Genomic_DNA"/>
</dbReference>
<dbReference type="RefSeq" id="WP_012660965.1">
    <property type="nucleotide sequence ID" value="NC_012039.1"/>
</dbReference>
<dbReference type="SMR" id="B9KEU6"/>
<dbReference type="STRING" id="306263.Cla_0218"/>
<dbReference type="KEGG" id="cla:CLA_0218"/>
<dbReference type="PATRIC" id="fig|306263.5.peg.217"/>
<dbReference type="eggNOG" id="COG0774">
    <property type="taxonomic scope" value="Bacteria"/>
</dbReference>
<dbReference type="HOGENOM" id="CLU_046528_1_0_7"/>
<dbReference type="UniPathway" id="UPA00359">
    <property type="reaction ID" value="UER00478"/>
</dbReference>
<dbReference type="Proteomes" id="UP000007727">
    <property type="component" value="Chromosome"/>
</dbReference>
<dbReference type="GO" id="GO:0016020">
    <property type="term" value="C:membrane"/>
    <property type="evidence" value="ECO:0007669"/>
    <property type="project" value="GOC"/>
</dbReference>
<dbReference type="GO" id="GO:0046872">
    <property type="term" value="F:metal ion binding"/>
    <property type="evidence" value="ECO:0007669"/>
    <property type="project" value="UniProtKB-KW"/>
</dbReference>
<dbReference type="GO" id="GO:0103117">
    <property type="term" value="F:UDP-3-O-acyl-N-acetylglucosamine deacetylase activity"/>
    <property type="evidence" value="ECO:0007669"/>
    <property type="project" value="UniProtKB-UniRule"/>
</dbReference>
<dbReference type="GO" id="GO:0009245">
    <property type="term" value="P:lipid A biosynthetic process"/>
    <property type="evidence" value="ECO:0007669"/>
    <property type="project" value="UniProtKB-UniRule"/>
</dbReference>
<dbReference type="Gene3D" id="3.30.230.20">
    <property type="entry name" value="lpxc deacetylase, domain 1"/>
    <property type="match status" value="1"/>
</dbReference>
<dbReference type="Gene3D" id="3.30.1700.10">
    <property type="entry name" value="lpxc deacetylase, domain 2"/>
    <property type="match status" value="1"/>
</dbReference>
<dbReference type="HAMAP" id="MF_00388">
    <property type="entry name" value="LpxC"/>
    <property type="match status" value="1"/>
</dbReference>
<dbReference type="InterPro" id="IPR020568">
    <property type="entry name" value="Ribosomal_Su5_D2-typ_SF"/>
</dbReference>
<dbReference type="InterPro" id="IPR004463">
    <property type="entry name" value="UDP-acyl_GlcNac_deAcase"/>
</dbReference>
<dbReference type="InterPro" id="IPR011334">
    <property type="entry name" value="UDP-acyl_GlcNac_deAcase_C"/>
</dbReference>
<dbReference type="InterPro" id="IPR015870">
    <property type="entry name" value="UDP-acyl_N-AcGlcN_deAcase_N"/>
</dbReference>
<dbReference type="NCBIfam" id="TIGR00325">
    <property type="entry name" value="lpxC"/>
    <property type="match status" value="1"/>
</dbReference>
<dbReference type="PANTHER" id="PTHR33694">
    <property type="entry name" value="UDP-3-O-ACYL-N-ACETYLGLUCOSAMINE DEACETYLASE 1, MITOCHONDRIAL-RELATED"/>
    <property type="match status" value="1"/>
</dbReference>
<dbReference type="PANTHER" id="PTHR33694:SF1">
    <property type="entry name" value="UDP-3-O-ACYL-N-ACETYLGLUCOSAMINE DEACETYLASE 1, MITOCHONDRIAL-RELATED"/>
    <property type="match status" value="1"/>
</dbReference>
<dbReference type="Pfam" id="PF03331">
    <property type="entry name" value="LpxC"/>
    <property type="match status" value="1"/>
</dbReference>
<dbReference type="SUPFAM" id="SSF54211">
    <property type="entry name" value="Ribosomal protein S5 domain 2-like"/>
    <property type="match status" value="2"/>
</dbReference>